<accession>P0CP45</accession>
<accession>Q55PK4</accession>
<accession>Q5KDV2</accession>
<proteinExistence type="inferred from homology"/>
<reference key="1">
    <citation type="journal article" date="2005" name="Science">
        <title>The genome of the basidiomycetous yeast and human pathogen Cryptococcus neoformans.</title>
        <authorList>
            <person name="Loftus B.J."/>
            <person name="Fung E."/>
            <person name="Roncaglia P."/>
            <person name="Rowley D."/>
            <person name="Amedeo P."/>
            <person name="Bruno D."/>
            <person name="Vamathevan J."/>
            <person name="Miranda M."/>
            <person name="Anderson I.J."/>
            <person name="Fraser J.A."/>
            <person name="Allen J.E."/>
            <person name="Bosdet I.E."/>
            <person name="Brent M.R."/>
            <person name="Chiu R."/>
            <person name="Doering T.L."/>
            <person name="Donlin M.J."/>
            <person name="D'Souza C.A."/>
            <person name="Fox D.S."/>
            <person name="Grinberg V."/>
            <person name="Fu J."/>
            <person name="Fukushima M."/>
            <person name="Haas B.J."/>
            <person name="Huang J.C."/>
            <person name="Janbon G."/>
            <person name="Jones S.J.M."/>
            <person name="Koo H.L."/>
            <person name="Krzywinski M.I."/>
            <person name="Kwon-Chung K.J."/>
            <person name="Lengeler K.B."/>
            <person name="Maiti R."/>
            <person name="Marra M.A."/>
            <person name="Marra R.E."/>
            <person name="Mathewson C.A."/>
            <person name="Mitchell T.G."/>
            <person name="Pertea M."/>
            <person name="Riggs F.R."/>
            <person name="Salzberg S.L."/>
            <person name="Schein J.E."/>
            <person name="Shvartsbeyn A."/>
            <person name="Shin H."/>
            <person name="Shumway M."/>
            <person name="Specht C.A."/>
            <person name="Suh B.B."/>
            <person name="Tenney A."/>
            <person name="Utterback T.R."/>
            <person name="Wickes B.L."/>
            <person name="Wortman J.R."/>
            <person name="Wye N.H."/>
            <person name="Kronstad J.W."/>
            <person name="Lodge J.K."/>
            <person name="Heitman J."/>
            <person name="Davis R.W."/>
            <person name="Fraser C.M."/>
            <person name="Hyman R.W."/>
        </authorList>
    </citation>
    <scope>NUCLEOTIDE SEQUENCE [LARGE SCALE GENOMIC DNA]</scope>
    <source>
        <strain>B-3501A</strain>
    </source>
</reference>
<feature type="chain" id="PRO_0000410180" description="Protein N-terminal and lysine N-methyltransferase EFM7">
    <location>
        <begin position="1"/>
        <end position="299"/>
    </location>
</feature>
<feature type="binding site" evidence="1">
    <location>
        <position position="74"/>
    </location>
    <ligand>
        <name>S-adenosyl-L-methionine</name>
        <dbReference type="ChEBI" id="CHEBI:59789"/>
    </ligand>
</feature>
<feature type="binding site" evidence="1">
    <location>
        <begin position="100"/>
        <end position="102"/>
    </location>
    <ligand>
        <name>S-adenosyl-L-methionine</name>
        <dbReference type="ChEBI" id="CHEBI:59789"/>
    </ligand>
</feature>
<feature type="binding site" evidence="1">
    <location>
        <position position="122"/>
    </location>
    <ligand>
        <name>S-adenosyl-L-methionine</name>
        <dbReference type="ChEBI" id="CHEBI:59789"/>
    </ligand>
</feature>
<feature type="binding site" evidence="1">
    <location>
        <position position="155"/>
    </location>
    <ligand>
        <name>S-adenosyl-L-methionine</name>
        <dbReference type="ChEBI" id="CHEBI:59789"/>
    </ligand>
</feature>
<feature type="binding site" evidence="1">
    <location>
        <position position="178"/>
    </location>
    <ligand>
        <name>S-adenosyl-L-methionine</name>
        <dbReference type="ChEBI" id="CHEBI:59789"/>
    </ligand>
</feature>
<evidence type="ECO:0000255" key="1">
    <source>
        <dbReference type="HAMAP-Rule" id="MF_03223"/>
    </source>
</evidence>
<sequence length="299" mass="33358">MSQDPILTSKGSQEEEDFFGLDNFFPEPESPLPPPFSFASYDIPANIDFYVPDHRKSLILRLVGSHPLWGHHLWNTARTLSTYLLETPQITQSRHVLELGAGAGLPSIVCVLAGSSKVIVTDYSDEGLLDNLRFNVDVNLEGEEKERIAVDGHVWGQSVDPLLGHLPKGQKYDLLILSDLVFNHSQHDALIKTVEATLTSSSTQSYDPSNPSAPLTEPSILVFFTHHRPHLAHADMAFFPRLAESGNGWAYEKVVEEWAGAMFENDPGDKKVRGTVHGWRAWRVRDGEERGEKPSRISL</sequence>
<keyword id="KW-0963">Cytoplasm</keyword>
<keyword id="KW-0489">Methyltransferase</keyword>
<keyword id="KW-0949">S-adenosyl-L-methionine</keyword>
<keyword id="KW-0808">Transferase</keyword>
<protein>
    <recommendedName>
        <fullName evidence="1">Protein N-terminal and lysine N-methyltransferase EFM7</fullName>
        <ecNumber evidence="1">2.1.1.-</ecNumber>
    </recommendedName>
    <alternativeName>
        <fullName evidence="1">Elongation factor methyltransferase 7</fullName>
    </alternativeName>
</protein>
<dbReference type="EC" id="2.1.1.-" evidence="1"/>
<dbReference type="EMBL" id="AAEY01000038">
    <property type="protein sequence ID" value="EAL19580.1"/>
    <property type="molecule type" value="Genomic_DNA"/>
</dbReference>
<dbReference type="RefSeq" id="XP_774227.1">
    <property type="nucleotide sequence ID" value="XM_769134.1"/>
</dbReference>
<dbReference type="SMR" id="P0CP45"/>
<dbReference type="GeneID" id="4937243"/>
<dbReference type="KEGG" id="cnb:CNBG2090"/>
<dbReference type="VEuPathDB" id="FungiDB:CNBG2090"/>
<dbReference type="HOGENOM" id="CLU_032409_0_0_1"/>
<dbReference type="OrthoDB" id="3730at5206"/>
<dbReference type="GO" id="GO:0005737">
    <property type="term" value="C:cytoplasm"/>
    <property type="evidence" value="ECO:0007669"/>
    <property type="project" value="UniProtKB-SubCell"/>
</dbReference>
<dbReference type="GO" id="GO:0071885">
    <property type="term" value="F:N-terminal protein N-methyltransferase activity"/>
    <property type="evidence" value="ECO:0007669"/>
    <property type="project" value="UniProtKB-UniRule"/>
</dbReference>
<dbReference type="GO" id="GO:0016279">
    <property type="term" value="F:protein-lysine N-methyltransferase activity"/>
    <property type="evidence" value="ECO:0007669"/>
    <property type="project" value="UniProtKB-UniRule"/>
</dbReference>
<dbReference type="GO" id="GO:0032259">
    <property type="term" value="P:methylation"/>
    <property type="evidence" value="ECO:0007669"/>
    <property type="project" value="UniProtKB-KW"/>
</dbReference>
<dbReference type="CDD" id="cd02440">
    <property type="entry name" value="AdoMet_MTases"/>
    <property type="match status" value="1"/>
</dbReference>
<dbReference type="Gene3D" id="3.40.50.150">
    <property type="entry name" value="Vaccinia Virus protein VP39"/>
    <property type="match status" value="1"/>
</dbReference>
<dbReference type="HAMAP" id="MF_03223">
    <property type="entry name" value="Methyltr_EFM7"/>
    <property type="match status" value="1"/>
</dbReference>
<dbReference type="InterPro" id="IPR025784">
    <property type="entry name" value="EFM7"/>
</dbReference>
<dbReference type="InterPro" id="IPR019410">
    <property type="entry name" value="Methyltransf_16"/>
</dbReference>
<dbReference type="InterPro" id="IPR029063">
    <property type="entry name" value="SAM-dependent_MTases_sf"/>
</dbReference>
<dbReference type="PANTHER" id="PTHR14614">
    <property type="entry name" value="HEPATOCELLULAR CARCINOMA-ASSOCIATED ANTIGEN"/>
    <property type="match status" value="1"/>
</dbReference>
<dbReference type="PANTHER" id="PTHR14614:SF10">
    <property type="entry name" value="PROTEIN N-TERMINAL AND LYSINE N-METHYLTRANSFERASE EFM7"/>
    <property type="match status" value="1"/>
</dbReference>
<dbReference type="Pfam" id="PF10294">
    <property type="entry name" value="Methyltransf_16"/>
    <property type="match status" value="1"/>
</dbReference>
<dbReference type="SUPFAM" id="SSF53335">
    <property type="entry name" value="S-adenosyl-L-methionine-dependent methyltransferases"/>
    <property type="match status" value="1"/>
</dbReference>
<dbReference type="PROSITE" id="PS51560">
    <property type="entry name" value="SAM_MT_NNT1"/>
    <property type="match status" value="1"/>
</dbReference>
<organism>
    <name type="scientific">Cryptococcus neoformans var. neoformans serotype D (strain B-3501A)</name>
    <name type="common">Filobasidiella neoformans</name>
    <dbReference type="NCBI Taxonomy" id="283643"/>
    <lineage>
        <taxon>Eukaryota</taxon>
        <taxon>Fungi</taxon>
        <taxon>Dikarya</taxon>
        <taxon>Basidiomycota</taxon>
        <taxon>Agaricomycotina</taxon>
        <taxon>Tremellomycetes</taxon>
        <taxon>Tremellales</taxon>
        <taxon>Cryptococcaceae</taxon>
        <taxon>Cryptococcus</taxon>
        <taxon>Cryptococcus neoformans species complex</taxon>
    </lineage>
</organism>
<comment type="function">
    <text evidence="1">S-adenosyl-L-methionine-dependent protein methyltransferase that trimethylates the N-terminal glycine 'Gly-2' of elongation factor 1-alpha, before also catalyzing the mono- and dimethylation of 'Lys-3'.</text>
</comment>
<comment type="subcellular location">
    <subcellularLocation>
        <location evidence="1">Cytoplasm</location>
    </subcellularLocation>
</comment>
<comment type="similarity">
    <text evidence="1">Belongs to the class I-like SAM-binding methyltransferase superfamily. EFM7 family.</text>
</comment>
<name>EFM7_CRYNB</name>
<gene>
    <name evidence="1" type="primary">EFM7</name>
    <name type="synonym">NNT1</name>
    <name type="ordered locus">CNBG2090</name>
</gene>